<reference key="1">
    <citation type="submission" date="2007-05" db="EMBL/GenBank/DDBJ databases">
        <title>Complete sequence of chromosome of Psychrobacter sp. PRwf-1.</title>
        <authorList>
            <consortium name="US DOE Joint Genome Institute"/>
            <person name="Copeland A."/>
            <person name="Lucas S."/>
            <person name="Lapidus A."/>
            <person name="Barry K."/>
            <person name="Detter J.C."/>
            <person name="Glavina del Rio T."/>
            <person name="Hammon N."/>
            <person name="Israni S."/>
            <person name="Dalin E."/>
            <person name="Tice H."/>
            <person name="Pitluck S."/>
            <person name="Chain P."/>
            <person name="Malfatti S."/>
            <person name="Shin M."/>
            <person name="Vergez L."/>
            <person name="Schmutz J."/>
            <person name="Larimer F."/>
            <person name="Land M."/>
            <person name="Hauser L."/>
            <person name="Kyrpides N."/>
            <person name="Kim E."/>
            <person name="Tiedje J."/>
            <person name="Richardson P."/>
        </authorList>
    </citation>
    <scope>NUCLEOTIDE SEQUENCE [LARGE SCALE GENOMIC DNA]</scope>
    <source>
        <strain>PRwf-1</strain>
    </source>
</reference>
<feature type="chain" id="PRO_1000073381" description="UPF0391 membrane protein PsycPRwf_2202">
    <location>
        <begin position="1"/>
        <end position="51"/>
    </location>
</feature>
<feature type="transmembrane region" description="Helical" evidence="1">
    <location>
        <begin position="6"/>
        <end position="26"/>
    </location>
</feature>
<feature type="transmembrane region" description="Helical" evidence="1">
    <location>
        <begin position="27"/>
        <end position="47"/>
    </location>
</feature>
<organism>
    <name type="scientific">Psychrobacter sp. (strain PRwf-1)</name>
    <dbReference type="NCBI Taxonomy" id="349106"/>
    <lineage>
        <taxon>Bacteria</taxon>
        <taxon>Pseudomonadati</taxon>
        <taxon>Pseudomonadota</taxon>
        <taxon>Gammaproteobacteria</taxon>
        <taxon>Moraxellales</taxon>
        <taxon>Moraxellaceae</taxon>
        <taxon>Psychrobacter</taxon>
    </lineage>
</organism>
<gene>
    <name type="ordered locus">PsycPRwf_2202</name>
</gene>
<evidence type="ECO:0000255" key="1">
    <source>
        <dbReference type="HAMAP-Rule" id="MF_01361"/>
    </source>
</evidence>
<protein>
    <recommendedName>
        <fullName evidence="1">UPF0391 membrane protein PsycPRwf_2202</fullName>
    </recommendedName>
</protein>
<dbReference type="EMBL" id="CP000713">
    <property type="protein sequence ID" value="ABQ95142.1"/>
    <property type="molecule type" value="Genomic_DNA"/>
</dbReference>
<dbReference type="SMR" id="A5WHK1"/>
<dbReference type="STRING" id="349106.PsycPRwf_2202"/>
<dbReference type="KEGG" id="prw:PsycPRwf_2202"/>
<dbReference type="eggNOG" id="COG5487">
    <property type="taxonomic scope" value="Bacteria"/>
</dbReference>
<dbReference type="HOGENOM" id="CLU_187346_2_0_6"/>
<dbReference type="GO" id="GO:0005886">
    <property type="term" value="C:plasma membrane"/>
    <property type="evidence" value="ECO:0007669"/>
    <property type="project" value="UniProtKB-SubCell"/>
</dbReference>
<dbReference type="HAMAP" id="MF_01361">
    <property type="entry name" value="UPF0391"/>
    <property type="match status" value="1"/>
</dbReference>
<dbReference type="InterPro" id="IPR009760">
    <property type="entry name" value="DUF1328"/>
</dbReference>
<dbReference type="NCBIfam" id="NF010227">
    <property type="entry name" value="PRK13682.1-2"/>
    <property type="match status" value="1"/>
</dbReference>
<dbReference type="NCBIfam" id="NF010229">
    <property type="entry name" value="PRK13682.1-4"/>
    <property type="match status" value="1"/>
</dbReference>
<dbReference type="Pfam" id="PF07043">
    <property type="entry name" value="DUF1328"/>
    <property type="match status" value="1"/>
</dbReference>
<dbReference type="PIRSF" id="PIRSF036466">
    <property type="entry name" value="UCP036466"/>
    <property type="match status" value="1"/>
</dbReference>
<name>Y2202_PSYWF</name>
<proteinExistence type="inferred from homology"/>
<keyword id="KW-1003">Cell membrane</keyword>
<keyword id="KW-0472">Membrane</keyword>
<keyword id="KW-0812">Transmembrane</keyword>
<keyword id="KW-1133">Transmembrane helix</keyword>
<sequence length="51" mass="5578">MFRWAIIFAVIALLASLLGFGGVAGLSQNFAYIFLVVAVILFIIGFISRRT</sequence>
<accession>A5WHK1</accession>
<comment type="subcellular location">
    <subcellularLocation>
        <location evidence="1">Cell membrane</location>
        <topology evidence="1">Multi-pass membrane protein</topology>
    </subcellularLocation>
</comment>
<comment type="similarity">
    <text evidence="1">Belongs to the UPF0391 family.</text>
</comment>